<accession>Q3ME15</accession>
<feature type="chain" id="PRO_1000012335" description="UDP-N-acetylmuramoyl-L-alanyl-D-glutamate--2,6-diaminopimelate ligase">
    <location>
        <begin position="1"/>
        <end position="496"/>
    </location>
</feature>
<feature type="short sequence motif" description="Meso-diaminopimelate recognition motif">
    <location>
        <begin position="413"/>
        <end position="416"/>
    </location>
</feature>
<feature type="binding site" evidence="1">
    <location>
        <position position="32"/>
    </location>
    <ligand>
        <name>UDP-N-acetyl-alpha-D-muramoyl-L-alanyl-D-glutamate</name>
        <dbReference type="ChEBI" id="CHEBI:83900"/>
    </ligand>
</feature>
<feature type="binding site" evidence="1">
    <location>
        <begin position="116"/>
        <end position="122"/>
    </location>
    <ligand>
        <name>ATP</name>
        <dbReference type="ChEBI" id="CHEBI:30616"/>
    </ligand>
</feature>
<feature type="binding site" evidence="1">
    <location>
        <begin position="158"/>
        <end position="159"/>
    </location>
    <ligand>
        <name>UDP-N-acetyl-alpha-D-muramoyl-L-alanyl-D-glutamate</name>
        <dbReference type="ChEBI" id="CHEBI:83900"/>
    </ligand>
</feature>
<feature type="binding site" evidence="1">
    <location>
        <position position="185"/>
    </location>
    <ligand>
        <name>UDP-N-acetyl-alpha-D-muramoyl-L-alanyl-D-glutamate</name>
        <dbReference type="ChEBI" id="CHEBI:83900"/>
    </ligand>
</feature>
<feature type="binding site" evidence="1">
    <location>
        <position position="191"/>
    </location>
    <ligand>
        <name>UDP-N-acetyl-alpha-D-muramoyl-L-alanyl-D-glutamate</name>
        <dbReference type="ChEBI" id="CHEBI:83900"/>
    </ligand>
</feature>
<feature type="binding site" evidence="1">
    <location>
        <position position="193"/>
    </location>
    <ligand>
        <name>UDP-N-acetyl-alpha-D-muramoyl-L-alanyl-D-glutamate</name>
        <dbReference type="ChEBI" id="CHEBI:83900"/>
    </ligand>
</feature>
<feature type="binding site" evidence="1">
    <location>
        <position position="389"/>
    </location>
    <ligand>
        <name>meso-2,6-diaminopimelate</name>
        <dbReference type="ChEBI" id="CHEBI:57791"/>
    </ligand>
</feature>
<feature type="binding site" evidence="1">
    <location>
        <begin position="413"/>
        <end position="416"/>
    </location>
    <ligand>
        <name>meso-2,6-diaminopimelate</name>
        <dbReference type="ChEBI" id="CHEBI:57791"/>
    </ligand>
</feature>
<feature type="binding site" evidence="1">
    <location>
        <position position="464"/>
    </location>
    <ligand>
        <name>meso-2,6-diaminopimelate</name>
        <dbReference type="ChEBI" id="CHEBI:57791"/>
    </ligand>
</feature>
<feature type="binding site" evidence="1">
    <location>
        <position position="468"/>
    </location>
    <ligand>
        <name>meso-2,6-diaminopimelate</name>
        <dbReference type="ChEBI" id="CHEBI:57791"/>
    </ligand>
</feature>
<feature type="modified residue" description="N6-carboxylysine" evidence="1">
    <location>
        <position position="225"/>
    </location>
</feature>
<sequence>MKLRELLATVDSVENLPPVLADTEVKGIKTNSHACGAGDLFIGMPGTRVDGGEFWPSAIASGAIAAIVSPQAVEKNPPSDEAVVISSNNMTKACAAIAAAFYGYPGQKLKLVGVTGTNGKTTTTHLIEFFLTKAQLSTALMGTLYTRWPGFEQTATHTTPFAVELQQQLAQAVNAGCEFGVMEVSSHALAQGRVLGCPFEVGVFSNLTQDHLDYHSDMEDYFAAKALLFSPDYLKGRAIINADDTYGQRLIKALSPEKVWSYSVNDSSADLWMSDLSYEPNGVTGTIHTPEGDVSFRSPLVGQYNLENLLASVGAVLHLGLDLQLIANAIPEFPGVPGRMERVQINPDQDISVIVDYAHTPDSLENLLKAARPFIPGRMICVFGCGGDRDRTKRPKMGKIAAELADLAFVTSDNPRTEDPEKILDDILAGIPDTVQPTVIGDRAIAIRTAILQAQPGDGVLLAGKGHEDYQILGTEKIHFDDREHARAALTEREKL</sequence>
<evidence type="ECO:0000255" key="1">
    <source>
        <dbReference type="HAMAP-Rule" id="MF_00208"/>
    </source>
</evidence>
<comment type="function">
    <text evidence="1">Catalyzes the addition of meso-diaminopimelic acid to the nucleotide precursor UDP-N-acetylmuramoyl-L-alanyl-D-glutamate (UMAG) in the biosynthesis of bacterial cell-wall peptidoglycan.</text>
</comment>
<comment type="catalytic activity">
    <reaction evidence="1">
        <text>UDP-N-acetyl-alpha-D-muramoyl-L-alanyl-D-glutamate + meso-2,6-diaminopimelate + ATP = UDP-N-acetyl-alpha-D-muramoyl-L-alanyl-gamma-D-glutamyl-meso-2,6-diaminopimelate + ADP + phosphate + H(+)</text>
        <dbReference type="Rhea" id="RHEA:23676"/>
        <dbReference type="ChEBI" id="CHEBI:15378"/>
        <dbReference type="ChEBI" id="CHEBI:30616"/>
        <dbReference type="ChEBI" id="CHEBI:43474"/>
        <dbReference type="ChEBI" id="CHEBI:57791"/>
        <dbReference type="ChEBI" id="CHEBI:83900"/>
        <dbReference type="ChEBI" id="CHEBI:83905"/>
        <dbReference type="ChEBI" id="CHEBI:456216"/>
        <dbReference type="EC" id="6.3.2.13"/>
    </reaction>
</comment>
<comment type="cofactor">
    <cofactor evidence="1">
        <name>Mg(2+)</name>
        <dbReference type="ChEBI" id="CHEBI:18420"/>
    </cofactor>
</comment>
<comment type="pathway">
    <text evidence="1">Cell wall biogenesis; peptidoglycan biosynthesis.</text>
</comment>
<comment type="subcellular location">
    <subcellularLocation>
        <location evidence="1">Cytoplasm</location>
    </subcellularLocation>
</comment>
<comment type="PTM">
    <text evidence="1">Carboxylation is probably crucial for Mg(2+) binding and, consequently, for the gamma-phosphate positioning of ATP.</text>
</comment>
<comment type="similarity">
    <text evidence="1">Belongs to the MurCDEF family. MurE subfamily.</text>
</comment>
<keyword id="KW-0067">ATP-binding</keyword>
<keyword id="KW-0131">Cell cycle</keyword>
<keyword id="KW-0132">Cell division</keyword>
<keyword id="KW-0133">Cell shape</keyword>
<keyword id="KW-0961">Cell wall biogenesis/degradation</keyword>
<keyword id="KW-0963">Cytoplasm</keyword>
<keyword id="KW-0436">Ligase</keyword>
<keyword id="KW-0460">Magnesium</keyword>
<keyword id="KW-0547">Nucleotide-binding</keyword>
<keyword id="KW-0573">Peptidoglycan synthesis</keyword>
<proteinExistence type="inferred from homology"/>
<protein>
    <recommendedName>
        <fullName evidence="1">UDP-N-acetylmuramoyl-L-alanyl-D-glutamate--2,6-diaminopimelate ligase</fullName>
        <ecNumber evidence="1">6.3.2.13</ecNumber>
    </recommendedName>
    <alternativeName>
        <fullName evidence="1">Meso-A2pm-adding enzyme</fullName>
    </alternativeName>
    <alternativeName>
        <fullName evidence="1">Meso-diaminopimelate-adding enzyme</fullName>
    </alternativeName>
    <alternativeName>
        <fullName evidence="1">UDP-MurNAc-L-Ala-D-Glu:meso-diaminopimelate ligase</fullName>
    </alternativeName>
    <alternativeName>
        <fullName evidence="1">UDP-MurNAc-tripeptide synthetase</fullName>
    </alternativeName>
    <alternativeName>
        <fullName evidence="1">UDP-N-acetylmuramyl-tripeptide synthetase</fullName>
    </alternativeName>
</protein>
<reference key="1">
    <citation type="journal article" date="2014" name="Stand. Genomic Sci.">
        <title>Complete genome sequence of Anabaena variabilis ATCC 29413.</title>
        <authorList>
            <person name="Thiel T."/>
            <person name="Pratte B.S."/>
            <person name="Zhong J."/>
            <person name="Goodwin L."/>
            <person name="Copeland A."/>
            <person name="Lucas S."/>
            <person name="Han C."/>
            <person name="Pitluck S."/>
            <person name="Land M.L."/>
            <person name="Kyrpides N.C."/>
            <person name="Woyke T."/>
        </authorList>
    </citation>
    <scope>NUCLEOTIDE SEQUENCE [LARGE SCALE GENOMIC DNA]</scope>
    <source>
        <strain>ATCC 29413 / PCC 7937</strain>
    </source>
</reference>
<gene>
    <name evidence="1" type="primary">murE</name>
    <name type="ordered locus">Ava_1147</name>
</gene>
<dbReference type="EC" id="6.3.2.13" evidence="1"/>
<dbReference type="EMBL" id="CP000117">
    <property type="protein sequence ID" value="ABA20771.1"/>
    <property type="molecule type" value="Genomic_DNA"/>
</dbReference>
<dbReference type="SMR" id="Q3ME15"/>
<dbReference type="STRING" id="240292.Ava_1147"/>
<dbReference type="KEGG" id="ava:Ava_1147"/>
<dbReference type="eggNOG" id="COG0769">
    <property type="taxonomic scope" value="Bacteria"/>
</dbReference>
<dbReference type="HOGENOM" id="CLU_022291_4_1_3"/>
<dbReference type="UniPathway" id="UPA00219"/>
<dbReference type="Proteomes" id="UP000002533">
    <property type="component" value="Chromosome"/>
</dbReference>
<dbReference type="GO" id="GO:0005737">
    <property type="term" value="C:cytoplasm"/>
    <property type="evidence" value="ECO:0007669"/>
    <property type="project" value="UniProtKB-SubCell"/>
</dbReference>
<dbReference type="GO" id="GO:0005524">
    <property type="term" value="F:ATP binding"/>
    <property type="evidence" value="ECO:0007669"/>
    <property type="project" value="UniProtKB-UniRule"/>
</dbReference>
<dbReference type="GO" id="GO:0000287">
    <property type="term" value="F:magnesium ion binding"/>
    <property type="evidence" value="ECO:0007669"/>
    <property type="project" value="UniProtKB-UniRule"/>
</dbReference>
<dbReference type="GO" id="GO:0008765">
    <property type="term" value="F:UDP-N-acetylmuramoylalanyl-D-glutamate-2,6-diaminopimelate ligase activity"/>
    <property type="evidence" value="ECO:0007669"/>
    <property type="project" value="UniProtKB-UniRule"/>
</dbReference>
<dbReference type="GO" id="GO:0051301">
    <property type="term" value="P:cell division"/>
    <property type="evidence" value="ECO:0007669"/>
    <property type="project" value="UniProtKB-KW"/>
</dbReference>
<dbReference type="GO" id="GO:0071555">
    <property type="term" value="P:cell wall organization"/>
    <property type="evidence" value="ECO:0007669"/>
    <property type="project" value="UniProtKB-KW"/>
</dbReference>
<dbReference type="GO" id="GO:0009252">
    <property type="term" value="P:peptidoglycan biosynthetic process"/>
    <property type="evidence" value="ECO:0007669"/>
    <property type="project" value="UniProtKB-UniRule"/>
</dbReference>
<dbReference type="GO" id="GO:0008360">
    <property type="term" value="P:regulation of cell shape"/>
    <property type="evidence" value="ECO:0007669"/>
    <property type="project" value="UniProtKB-KW"/>
</dbReference>
<dbReference type="FunFam" id="3.90.190.20:FF:000006">
    <property type="entry name" value="UDP-N-acetylmuramoyl-L-alanyl-D-glutamate--2,6-diaminopimelate ligase"/>
    <property type="match status" value="1"/>
</dbReference>
<dbReference type="Gene3D" id="3.90.190.20">
    <property type="entry name" value="Mur ligase, C-terminal domain"/>
    <property type="match status" value="1"/>
</dbReference>
<dbReference type="Gene3D" id="3.40.1190.10">
    <property type="entry name" value="Mur-like, catalytic domain"/>
    <property type="match status" value="1"/>
</dbReference>
<dbReference type="Gene3D" id="3.40.1390.10">
    <property type="entry name" value="MurE/MurF, N-terminal domain"/>
    <property type="match status" value="1"/>
</dbReference>
<dbReference type="HAMAP" id="MF_00208">
    <property type="entry name" value="MurE"/>
    <property type="match status" value="1"/>
</dbReference>
<dbReference type="InterPro" id="IPR036565">
    <property type="entry name" value="Mur-like_cat_sf"/>
</dbReference>
<dbReference type="InterPro" id="IPR004101">
    <property type="entry name" value="Mur_ligase_C"/>
</dbReference>
<dbReference type="InterPro" id="IPR036615">
    <property type="entry name" value="Mur_ligase_C_dom_sf"/>
</dbReference>
<dbReference type="InterPro" id="IPR013221">
    <property type="entry name" value="Mur_ligase_cen"/>
</dbReference>
<dbReference type="InterPro" id="IPR000713">
    <property type="entry name" value="Mur_ligase_N"/>
</dbReference>
<dbReference type="InterPro" id="IPR035911">
    <property type="entry name" value="MurE/MurF_N"/>
</dbReference>
<dbReference type="InterPro" id="IPR005761">
    <property type="entry name" value="UDP-N-AcMur-Glu-dNH2Pim_ligase"/>
</dbReference>
<dbReference type="NCBIfam" id="TIGR01085">
    <property type="entry name" value="murE"/>
    <property type="match status" value="1"/>
</dbReference>
<dbReference type="NCBIfam" id="NF001124">
    <property type="entry name" value="PRK00139.1-2"/>
    <property type="match status" value="1"/>
</dbReference>
<dbReference type="NCBIfam" id="NF001126">
    <property type="entry name" value="PRK00139.1-4"/>
    <property type="match status" value="1"/>
</dbReference>
<dbReference type="PANTHER" id="PTHR23135">
    <property type="entry name" value="MUR LIGASE FAMILY MEMBER"/>
    <property type="match status" value="1"/>
</dbReference>
<dbReference type="PANTHER" id="PTHR23135:SF4">
    <property type="entry name" value="UDP-N-ACETYLMURAMOYL-L-ALANYL-D-GLUTAMATE--2,6-DIAMINOPIMELATE LIGASE MURE HOMOLOG, CHLOROPLASTIC"/>
    <property type="match status" value="1"/>
</dbReference>
<dbReference type="Pfam" id="PF01225">
    <property type="entry name" value="Mur_ligase"/>
    <property type="match status" value="1"/>
</dbReference>
<dbReference type="Pfam" id="PF02875">
    <property type="entry name" value="Mur_ligase_C"/>
    <property type="match status" value="1"/>
</dbReference>
<dbReference type="Pfam" id="PF08245">
    <property type="entry name" value="Mur_ligase_M"/>
    <property type="match status" value="1"/>
</dbReference>
<dbReference type="SUPFAM" id="SSF53623">
    <property type="entry name" value="MurD-like peptide ligases, catalytic domain"/>
    <property type="match status" value="1"/>
</dbReference>
<dbReference type="SUPFAM" id="SSF53244">
    <property type="entry name" value="MurD-like peptide ligases, peptide-binding domain"/>
    <property type="match status" value="1"/>
</dbReference>
<dbReference type="SUPFAM" id="SSF63418">
    <property type="entry name" value="MurE/MurF N-terminal domain"/>
    <property type="match status" value="1"/>
</dbReference>
<organism>
    <name type="scientific">Trichormus variabilis (strain ATCC 29413 / PCC 7937)</name>
    <name type="common">Anabaena variabilis</name>
    <dbReference type="NCBI Taxonomy" id="240292"/>
    <lineage>
        <taxon>Bacteria</taxon>
        <taxon>Bacillati</taxon>
        <taxon>Cyanobacteriota</taxon>
        <taxon>Cyanophyceae</taxon>
        <taxon>Nostocales</taxon>
        <taxon>Nostocaceae</taxon>
        <taxon>Trichormus</taxon>
    </lineage>
</organism>
<name>MURE_TRIV2</name>